<feature type="signal peptide" evidence="2">
    <location>
        <begin position="1"/>
        <end position="23"/>
    </location>
</feature>
<feature type="chain" id="PRO_0000023455" description="Trefoil factor 1">
    <location>
        <begin position="24"/>
        <end position="81"/>
    </location>
</feature>
<feature type="domain" description="P-type" evidence="3">
    <location>
        <begin position="26"/>
        <end position="69"/>
    </location>
</feature>
<feature type="disulfide bond" evidence="3">
    <location>
        <begin position="28"/>
        <end position="54"/>
    </location>
</feature>
<feature type="disulfide bond" evidence="3">
    <location>
        <begin position="38"/>
        <end position="53"/>
    </location>
</feature>
<feature type="disulfide bond" evidence="3">
    <location>
        <begin position="48"/>
        <end position="65"/>
    </location>
</feature>
<proteinExistence type="inferred from homology"/>
<protein>
    <recommendedName>
        <fullName>Trefoil factor 1</fullName>
    </recommendedName>
</protein>
<accession>Q863T4</accession>
<dbReference type="EMBL" id="AY258287">
    <property type="protein sequence ID" value="AAP14905.1"/>
    <property type="molecule type" value="mRNA"/>
</dbReference>
<dbReference type="RefSeq" id="NP_001002992.1">
    <property type="nucleotide sequence ID" value="NM_001002992.1"/>
</dbReference>
<dbReference type="SMR" id="Q863T4"/>
<dbReference type="FunCoup" id="Q863T4">
    <property type="interactions" value="6"/>
</dbReference>
<dbReference type="STRING" id="9615.ENSCAFP00000050000"/>
<dbReference type="PaxDb" id="9612-ENSCAFP00000015219"/>
<dbReference type="GeneID" id="403491"/>
<dbReference type="KEGG" id="cfa:403491"/>
<dbReference type="CTD" id="7031"/>
<dbReference type="eggNOG" id="ENOG502S00P">
    <property type="taxonomic scope" value="Eukaryota"/>
</dbReference>
<dbReference type="HOGENOM" id="CLU_179440_1_0_1"/>
<dbReference type="InParanoid" id="Q863T4"/>
<dbReference type="OMA" id="FPWCFHP"/>
<dbReference type="OrthoDB" id="10051464at2759"/>
<dbReference type="TreeFam" id="TF336092"/>
<dbReference type="Proteomes" id="UP000002254">
    <property type="component" value="Unplaced"/>
</dbReference>
<dbReference type="Proteomes" id="UP000694429">
    <property type="component" value="Unplaced"/>
</dbReference>
<dbReference type="Proteomes" id="UP000694542">
    <property type="component" value="Unplaced"/>
</dbReference>
<dbReference type="Proteomes" id="UP000805418">
    <property type="component" value="Unplaced"/>
</dbReference>
<dbReference type="GO" id="GO:0005615">
    <property type="term" value="C:extracellular space"/>
    <property type="evidence" value="ECO:0000318"/>
    <property type="project" value="GO_Central"/>
</dbReference>
<dbReference type="GO" id="GO:0008083">
    <property type="term" value="F:growth factor activity"/>
    <property type="evidence" value="ECO:0007669"/>
    <property type="project" value="UniProtKB-KW"/>
</dbReference>
<dbReference type="GO" id="GO:0030277">
    <property type="term" value="P:maintenance of gastrointestinal epithelium"/>
    <property type="evidence" value="ECO:0000318"/>
    <property type="project" value="GO_Central"/>
</dbReference>
<dbReference type="CDD" id="cd00111">
    <property type="entry name" value="Trefoil"/>
    <property type="match status" value="1"/>
</dbReference>
<dbReference type="FunFam" id="4.10.110.10:FF:000001">
    <property type="entry name" value="Trefoil factor 3"/>
    <property type="match status" value="1"/>
</dbReference>
<dbReference type="Gene3D" id="4.10.110.10">
    <property type="entry name" value="Spasmolytic Protein, domain 1"/>
    <property type="match status" value="1"/>
</dbReference>
<dbReference type="InterPro" id="IPR017994">
    <property type="entry name" value="P_trefoil_chordata"/>
</dbReference>
<dbReference type="InterPro" id="IPR017957">
    <property type="entry name" value="P_trefoil_CS"/>
</dbReference>
<dbReference type="InterPro" id="IPR000519">
    <property type="entry name" value="P_trefoil_dom"/>
</dbReference>
<dbReference type="InterPro" id="IPR044913">
    <property type="entry name" value="P_trefoil_dom_sf"/>
</dbReference>
<dbReference type="PANTHER" id="PTHR13826">
    <property type="entry name" value="INTESTINAL TREFOIL FACTOR-RELATED"/>
    <property type="match status" value="1"/>
</dbReference>
<dbReference type="PANTHER" id="PTHR13826:SF18">
    <property type="entry name" value="TREFOIL FACTOR 1"/>
    <property type="match status" value="1"/>
</dbReference>
<dbReference type="Pfam" id="PF00088">
    <property type="entry name" value="Trefoil"/>
    <property type="match status" value="1"/>
</dbReference>
<dbReference type="PRINTS" id="PR00680">
    <property type="entry name" value="PTREFOIL"/>
</dbReference>
<dbReference type="SMART" id="SM00018">
    <property type="entry name" value="PD"/>
    <property type="match status" value="1"/>
</dbReference>
<dbReference type="SUPFAM" id="SSF57492">
    <property type="entry name" value="Trefoil"/>
    <property type="match status" value="1"/>
</dbReference>
<dbReference type="PROSITE" id="PS00025">
    <property type="entry name" value="P_TREFOIL_1"/>
    <property type="match status" value="1"/>
</dbReference>
<dbReference type="PROSITE" id="PS51448">
    <property type="entry name" value="P_TREFOIL_2"/>
    <property type="match status" value="1"/>
</dbReference>
<name>TFF1_CANLF</name>
<evidence type="ECO:0000250" key="1"/>
<evidence type="ECO:0000255" key="2"/>
<evidence type="ECO:0000255" key="3">
    <source>
        <dbReference type="PROSITE-ProRule" id="PRU00779"/>
    </source>
</evidence>
<keyword id="KW-1015">Disulfide bond</keyword>
<keyword id="KW-0339">Growth factor</keyword>
<keyword id="KW-1185">Reference proteome</keyword>
<keyword id="KW-0964">Secreted</keyword>
<keyword id="KW-0732">Signal</keyword>
<organism>
    <name type="scientific">Canis lupus familiaris</name>
    <name type="common">Dog</name>
    <name type="synonym">Canis familiaris</name>
    <dbReference type="NCBI Taxonomy" id="9615"/>
    <lineage>
        <taxon>Eukaryota</taxon>
        <taxon>Metazoa</taxon>
        <taxon>Chordata</taxon>
        <taxon>Craniata</taxon>
        <taxon>Vertebrata</taxon>
        <taxon>Euteleostomi</taxon>
        <taxon>Mammalia</taxon>
        <taxon>Eutheria</taxon>
        <taxon>Laurasiatheria</taxon>
        <taxon>Carnivora</taxon>
        <taxon>Caniformia</taxon>
        <taxon>Canidae</taxon>
        <taxon>Canis</taxon>
    </lineage>
</organism>
<gene>
    <name type="primary">TFF1</name>
</gene>
<sequence>MEHRVIYVLVLVCALTLSSLAQGQQETCTVAPHHRDNCGSPGITPSQCKDKGCCFDNTVRGVPWCYYPVAVDNPPEEECPF</sequence>
<comment type="function">
    <text evidence="1">Stabilizer of the mucous gel overlying the gastrointestinal mucosa that provides a physical barrier against various noxious agents.</text>
</comment>
<comment type="subcellular location">
    <subcellularLocation>
        <location evidence="1">Secreted</location>
    </subcellularLocation>
</comment>
<reference key="1">
    <citation type="submission" date="2003-03" db="EMBL/GenBank/DDBJ databases">
        <title>Canine trefoil factor 1 (TFF1) mRNA from gastric mucosa.</title>
        <authorList>
            <person name="Campbell B.G."/>
            <person name="Jabbes M."/>
        </authorList>
    </citation>
    <scope>NUCLEOTIDE SEQUENCE [MRNA]</scope>
    <source>
        <tissue>Stomach</tissue>
    </source>
</reference>